<name>YIF5_YEAST</name>
<organism>
    <name type="scientific">Saccharomyces cerevisiae (strain ATCC 204508 / S288c)</name>
    <name type="common">Baker's yeast</name>
    <dbReference type="NCBI Taxonomy" id="559292"/>
    <lineage>
        <taxon>Eukaryota</taxon>
        <taxon>Fungi</taxon>
        <taxon>Dikarya</taxon>
        <taxon>Ascomycota</taxon>
        <taxon>Saccharomycotina</taxon>
        <taxon>Saccharomycetes</taxon>
        <taxon>Saccharomycetales</taxon>
        <taxon>Saccharomycetaceae</taxon>
        <taxon>Saccharomyces</taxon>
    </lineage>
</organism>
<keyword id="KW-0597">Phosphoprotein</keyword>
<keyword id="KW-1185">Reference proteome</keyword>
<sequence length="627" mass="70733">MTLEPHYSAKSAASASAFVARSATESSTASTKAAPRKKTYSQSNGIPIRIDNLPPGKTWAQVKYLIGGIIYHTNILQVKMLPPMTSMVPPFITFQSCIVILKNSIDNESLENLLLTLNTYQWDYHDLFVYLLPYTNDSPSLRYPEISDSNNDVRSAPDETKRSISPRYASHVSSVTPQPPSASTPPSQFFSFSPEVSLRKNENITPLPTPVPVPVGVPPLAPPPHGPFSTSMLPMLGAPPGTVPNMQMPYQTTLPSPTAAATAGGPLASPTHYPRRRHFYHQNQSQFQKYMHNSPRNPDTGTGPRLSQQHHLSLRNNKINPSYNEISALYNLNMASNSNNNGNIPTTSTNGDDRALQAKNGGTITPSQTQINHKRLKHIFNEKSFRKQMTNRGMWQLKIINFPPYIPIEFLEKLSESDFNELMNQEKFTVIEIKEKGQLEKFGRLRWTVLKDFIKLKCPKLLRLQERQFLQQQNEASLLNESMDALKISENENTNGSANNSTYTNGGPRTSINNTREFYVGVYEDHEEATLLRFELPEDELEEFNRNLPTTFAQSGNVSDSEGDSKAKYFKVSTIVYNAIVGFHDKELSDLTFESLQDQEYSLGYKIHVMELPPFDEDEFENQRQQF</sequence>
<accession>P40523</accession>
<accession>D6VVM7</accession>
<gene>
    <name type="ordered locus">YIL055C</name>
</gene>
<feature type="chain" id="PRO_0000202989" description="Uncharacterized protein YIL055C">
    <location>
        <begin position="1"/>
        <end position="627"/>
    </location>
</feature>
<feature type="region of interest" description="Disordered" evidence="1">
    <location>
        <begin position="141"/>
        <end position="187"/>
    </location>
</feature>
<feature type="region of interest" description="Disordered" evidence="1">
    <location>
        <begin position="490"/>
        <end position="510"/>
    </location>
</feature>
<feature type="compositionally biased region" description="Polar residues" evidence="1">
    <location>
        <begin position="491"/>
        <end position="510"/>
    </location>
</feature>
<feature type="modified residue" description="Phosphoserine" evidence="2 3">
    <location>
        <position position="559"/>
    </location>
</feature>
<proteinExistence type="evidence at protein level"/>
<evidence type="ECO:0000256" key="1">
    <source>
        <dbReference type="SAM" id="MobiDB-lite"/>
    </source>
</evidence>
<evidence type="ECO:0007744" key="2">
    <source>
    </source>
</evidence>
<evidence type="ECO:0007744" key="3">
    <source>
    </source>
</evidence>
<dbReference type="EMBL" id="Z38060">
    <property type="protein sequence ID" value="CAA86167.1"/>
    <property type="molecule type" value="Genomic_DNA"/>
</dbReference>
<dbReference type="EMBL" id="BK006942">
    <property type="protein sequence ID" value="DAA08493.1"/>
    <property type="molecule type" value="Genomic_DNA"/>
</dbReference>
<dbReference type="PIR" id="S48424">
    <property type="entry name" value="S48424"/>
</dbReference>
<dbReference type="RefSeq" id="NP_012209.1">
    <property type="nucleotide sequence ID" value="NM_001179405.1"/>
</dbReference>
<dbReference type="BioGRID" id="34936">
    <property type="interactions" value="107"/>
</dbReference>
<dbReference type="DIP" id="DIP-4482N"/>
<dbReference type="FunCoup" id="P40523">
    <property type="interactions" value="91"/>
</dbReference>
<dbReference type="IntAct" id="P40523">
    <property type="interactions" value="8"/>
</dbReference>
<dbReference type="STRING" id="4932.YIL055C"/>
<dbReference type="GlyGen" id="P40523">
    <property type="glycosylation" value="4 sites, 1 O-linked glycan (1 site)"/>
</dbReference>
<dbReference type="iPTMnet" id="P40523"/>
<dbReference type="PaxDb" id="4932-YIL055C"/>
<dbReference type="PeptideAtlas" id="P40523"/>
<dbReference type="EnsemblFungi" id="YIL055C_mRNA">
    <property type="protein sequence ID" value="YIL055C"/>
    <property type="gene ID" value="YIL055C"/>
</dbReference>
<dbReference type="GeneID" id="854756"/>
<dbReference type="KEGG" id="sce:YIL055C"/>
<dbReference type="AGR" id="SGD:S000001317"/>
<dbReference type="SGD" id="S000001317">
    <property type="gene designation" value="YIL055C"/>
</dbReference>
<dbReference type="VEuPathDB" id="FungiDB:YIL055C"/>
<dbReference type="eggNOG" id="ENOG502QQKM">
    <property type="taxonomic scope" value="Eukaryota"/>
</dbReference>
<dbReference type="HOGENOM" id="CLU_034883_0_0_1"/>
<dbReference type="InParanoid" id="P40523"/>
<dbReference type="OMA" id="NTYQWDY"/>
<dbReference type="OrthoDB" id="4068713at2759"/>
<dbReference type="BioCyc" id="YEAST:G3O-31325-MONOMER"/>
<dbReference type="BioGRID-ORCS" id="854756">
    <property type="hits" value="4 hits in 10 CRISPR screens"/>
</dbReference>
<dbReference type="PRO" id="PR:P40523"/>
<dbReference type="Proteomes" id="UP000002311">
    <property type="component" value="Chromosome IX"/>
</dbReference>
<dbReference type="RNAct" id="P40523">
    <property type="molecule type" value="protein"/>
</dbReference>
<dbReference type="GO" id="GO:0005739">
    <property type="term" value="C:mitochondrion"/>
    <property type="evidence" value="ECO:0007005"/>
    <property type="project" value="SGD"/>
</dbReference>
<protein>
    <recommendedName>
        <fullName>Uncharacterized protein YIL055C</fullName>
    </recommendedName>
</protein>
<reference key="1">
    <citation type="journal article" date="1997" name="Nature">
        <title>The nucleotide sequence of Saccharomyces cerevisiae chromosome IX.</title>
        <authorList>
            <person name="Churcher C.M."/>
            <person name="Bowman S."/>
            <person name="Badcock K."/>
            <person name="Bankier A.T."/>
            <person name="Brown D."/>
            <person name="Chillingworth T."/>
            <person name="Connor R."/>
            <person name="Devlin K."/>
            <person name="Gentles S."/>
            <person name="Hamlin N."/>
            <person name="Harris D.E."/>
            <person name="Horsnell T."/>
            <person name="Hunt S."/>
            <person name="Jagels K."/>
            <person name="Jones M."/>
            <person name="Lye G."/>
            <person name="Moule S."/>
            <person name="Odell C."/>
            <person name="Pearson D."/>
            <person name="Rajandream M.A."/>
            <person name="Rice P."/>
            <person name="Rowley N."/>
            <person name="Skelton J."/>
            <person name="Smith V."/>
            <person name="Walsh S.V."/>
            <person name="Whitehead S."/>
            <person name="Barrell B.G."/>
        </authorList>
    </citation>
    <scope>NUCLEOTIDE SEQUENCE [LARGE SCALE GENOMIC DNA]</scope>
    <source>
        <strain>ATCC 204508 / S288c</strain>
    </source>
</reference>
<reference key="2">
    <citation type="journal article" date="2014" name="G3 (Bethesda)">
        <title>The reference genome sequence of Saccharomyces cerevisiae: Then and now.</title>
        <authorList>
            <person name="Engel S.R."/>
            <person name="Dietrich F.S."/>
            <person name="Fisk D.G."/>
            <person name="Binkley G."/>
            <person name="Balakrishnan R."/>
            <person name="Costanzo M.C."/>
            <person name="Dwight S.S."/>
            <person name="Hitz B.C."/>
            <person name="Karra K."/>
            <person name="Nash R.S."/>
            <person name="Weng S."/>
            <person name="Wong E.D."/>
            <person name="Lloyd P."/>
            <person name="Skrzypek M.S."/>
            <person name="Miyasato S.R."/>
            <person name="Simison M."/>
            <person name="Cherry J.M."/>
        </authorList>
    </citation>
    <scope>GENOME REANNOTATION</scope>
    <source>
        <strain>ATCC 204508 / S288c</strain>
    </source>
</reference>
<reference key="3">
    <citation type="journal article" date="2008" name="Mol. Cell. Proteomics">
        <title>A multidimensional chromatography technology for in-depth phosphoproteome analysis.</title>
        <authorList>
            <person name="Albuquerque C.P."/>
            <person name="Smolka M.B."/>
            <person name="Payne S.H."/>
            <person name="Bafna V."/>
            <person name="Eng J."/>
            <person name="Zhou H."/>
        </authorList>
    </citation>
    <scope>PHOSPHORYLATION [LARGE SCALE ANALYSIS] AT SER-559</scope>
    <scope>IDENTIFICATION BY MASS SPECTROMETRY [LARGE SCALE ANALYSIS]</scope>
</reference>
<reference key="4">
    <citation type="journal article" date="2009" name="Science">
        <title>Global analysis of Cdk1 substrate phosphorylation sites provides insights into evolution.</title>
        <authorList>
            <person name="Holt L.J."/>
            <person name="Tuch B.B."/>
            <person name="Villen J."/>
            <person name="Johnson A.D."/>
            <person name="Gygi S.P."/>
            <person name="Morgan D.O."/>
        </authorList>
    </citation>
    <scope>PHOSPHORYLATION [LARGE SCALE ANALYSIS] AT SER-559</scope>
    <scope>IDENTIFICATION BY MASS SPECTROMETRY [LARGE SCALE ANALYSIS]</scope>
</reference>